<organism>
    <name type="scientific">Aquifex aeolicus (strain VF5)</name>
    <dbReference type="NCBI Taxonomy" id="224324"/>
    <lineage>
        <taxon>Bacteria</taxon>
        <taxon>Pseudomonadati</taxon>
        <taxon>Aquificota</taxon>
        <taxon>Aquificia</taxon>
        <taxon>Aquificales</taxon>
        <taxon>Aquificaceae</taxon>
        <taxon>Aquifex</taxon>
    </lineage>
</organism>
<accession>O66413</accession>
<geneLocation type="plasmid">
    <name>ece1</name>
</geneLocation>
<keyword id="KW-0614">Plasmid</keyword>
<keyword id="KW-1185">Reference proteome</keyword>
<feature type="chain" id="PRO_0000186993" description="Uncharacterized protein aq_aa22">
    <location>
        <begin position="1"/>
        <end position="172"/>
    </location>
</feature>
<reference key="1">
    <citation type="journal article" date="1998" name="Nature">
        <title>The complete genome of the hyperthermophilic bacterium Aquifex aeolicus.</title>
        <authorList>
            <person name="Deckert G."/>
            <person name="Warren P.V."/>
            <person name="Gaasterland T."/>
            <person name="Young W.G."/>
            <person name="Lenox A.L."/>
            <person name="Graham D.E."/>
            <person name="Overbeek R."/>
            <person name="Snead M.A."/>
            <person name="Keller M."/>
            <person name="Aujay M."/>
            <person name="Huber R."/>
            <person name="Feldman R.A."/>
            <person name="Short J.M."/>
            <person name="Olsen G.J."/>
            <person name="Swanson R.V."/>
        </authorList>
    </citation>
    <scope>NUCLEOTIDE SEQUENCE [LARGE SCALE GENOMIC DNA]</scope>
    <source>
        <strain>VF5</strain>
    </source>
</reference>
<sequence>MDIKLDKNVVKMVMSSKEEELMPSIGWEGKKEIPVLITNVETKIPKGHPVIFKMVPIDEGKVTAVFIFLTVGEQLWTVFNPANTYYRLFLKAMTEADKLAICFPNKKAISIKTTEEMKKAARILLDTIEEFQWDSEEFAEALEKIAENYTLEDIEMIAVQEWKKRTGQEKEN</sequence>
<protein>
    <recommendedName>
        <fullName>Uncharacterized protein aq_aa22</fullName>
    </recommendedName>
</protein>
<name>YZ22_AQUAE</name>
<gene>
    <name type="ordered locus">aq_aa22</name>
</gene>
<dbReference type="EMBL" id="AE000667">
    <property type="protein sequence ID" value="AAC07965.1"/>
    <property type="molecule type" value="Genomic_DNA"/>
</dbReference>
<dbReference type="RefSeq" id="NP_046413.1">
    <property type="nucleotide sequence ID" value="NC_001880.1"/>
</dbReference>
<dbReference type="RefSeq" id="WP_010890559.1">
    <property type="nucleotide sequence ID" value="NC_001880.1"/>
</dbReference>
<dbReference type="EnsemblBacteria" id="AAC07965">
    <property type="protein sequence ID" value="AAC07965"/>
    <property type="gene ID" value="aq_aa22"/>
</dbReference>
<dbReference type="KEGG" id="aae:aq_aa22"/>
<dbReference type="HOGENOM" id="CLU_1552111_0_0_0"/>
<dbReference type="InParanoid" id="O66413"/>
<dbReference type="Proteomes" id="UP000000798">
    <property type="component" value="Plasmid ece1"/>
</dbReference>
<proteinExistence type="predicted"/>